<sequence length="84" mass="9459">MVIIRLARGGSKKRPFYNIVATDSRNRRDGRFIERVGFYNPVATKGEALRIAQDRLTYWQGVGAQLSPTVERLVKQAQKAQPAA</sequence>
<name>RS16_BURMS</name>
<comment type="similarity">
    <text evidence="1">Belongs to the bacterial ribosomal protein bS16 family.</text>
</comment>
<evidence type="ECO:0000255" key="1">
    <source>
        <dbReference type="HAMAP-Rule" id="MF_00385"/>
    </source>
</evidence>
<evidence type="ECO:0000305" key="2"/>
<accession>A1V6J4</accession>
<reference key="1">
    <citation type="journal article" date="2010" name="Genome Biol. Evol.">
        <title>Continuing evolution of Burkholderia mallei through genome reduction and large-scale rearrangements.</title>
        <authorList>
            <person name="Losada L."/>
            <person name="Ronning C.M."/>
            <person name="DeShazer D."/>
            <person name="Woods D."/>
            <person name="Fedorova N."/>
            <person name="Kim H.S."/>
            <person name="Shabalina S.A."/>
            <person name="Pearson T.R."/>
            <person name="Brinkac L."/>
            <person name="Tan P."/>
            <person name="Nandi T."/>
            <person name="Crabtree J."/>
            <person name="Badger J."/>
            <person name="Beckstrom-Sternberg S."/>
            <person name="Saqib M."/>
            <person name="Schutzer S.E."/>
            <person name="Keim P."/>
            <person name="Nierman W.C."/>
        </authorList>
    </citation>
    <scope>NUCLEOTIDE SEQUENCE [LARGE SCALE GENOMIC DNA]</scope>
    <source>
        <strain>SAVP1</strain>
    </source>
</reference>
<proteinExistence type="inferred from homology"/>
<keyword id="KW-0687">Ribonucleoprotein</keyword>
<keyword id="KW-0689">Ribosomal protein</keyword>
<dbReference type="EMBL" id="CP000526">
    <property type="protein sequence ID" value="ABM51396.1"/>
    <property type="molecule type" value="Genomic_DNA"/>
</dbReference>
<dbReference type="RefSeq" id="WP_004189402.1">
    <property type="nucleotide sequence ID" value="NC_008785.1"/>
</dbReference>
<dbReference type="SMR" id="A1V6J4"/>
<dbReference type="GeneID" id="93061079"/>
<dbReference type="KEGG" id="bmv:BMASAVP1_A2545"/>
<dbReference type="HOGENOM" id="CLU_100590_5_1_4"/>
<dbReference type="GO" id="GO:0005737">
    <property type="term" value="C:cytoplasm"/>
    <property type="evidence" value="ECO:0007669"/>
    <property type="project" value="UniProtKB-ARBA"/>
</dbReference>
<dbReference type="GO" id="GO:0015935">
    <property type="term" value="C:small ribosomal subunit"/>
    <property type="evidence" value="ECO:0007669"/>
    <property type="project" value="TreeGrafter"/>
</dbReference>
<dbReference type="GO" id="GO:0003735">
    <property type="term" value="F:structural constituent of ribosome"/>
    <property type="evidence" value="ECO:0007669"/>
    <property type="project" value="InterPro"/>
</dbReference>
<dbReference type="GO" id="GO:0006412">
    <property type="term" value="P:translation"/>
    <property type="evidence" value="ECO:0007669"/>
    <property type="project" value="UniProtKB-UniRule"/>
</dbReference>
<dbReference type="Gene3D" id="3.30.1320.10">
    <property type="match status" value="1"/>
</dbReference>
<dbReference type="HAMAP" id="MF_00385">
    <property type="entry name" value="Ribosomal_bS16"/>
    <property type="match status" value="1"/>
</dbReference>
<dbReference type="InterPro" id="IPR000307">
    <property type="entry name" value="Ribosomal_bS16"/>
</dbReference>
<dbReference type="InterPro" id="IPR023803">
    <property type="entry name" value="Ribosomal_bS16_dom_sf"/>
</dbReference>
<dbReference type="NCBIfam" id="TIGR00002">
    <property type="entry name" value="S16"/>
    <property type="match status" value="1"/>
</dbReference>
<dbReference type="PANTHER" id="PTHR12919">
    <property type="entry name" value="30S RIBOSOMAL PROTEIN S16"/>
    <property type="match status" value="1"/>
</dbReference>
<dbReference type="PANTHER" id="PTHR12919:SF20">
    <property type="entry name" value="SMALL RIBOSOMAL SUBUNIT PROTEIN BS16M"/>
    <property type="match status" value="1"/>
</dbReference>
<dbReference type="Pfam" id="PF00886">
    <property type="entry name" value="Ribosomal_S16"/>
    <property type="match status" value="1"/>
</dbReference>
<dbReference type="SUPFAM" id="SSF54565">
    <property type="entry name" value="Ribosomal protein S16"/>
    <property type="match status" value="1"/>
</dbReference>
<protein>
    <recommendedName>
        <fullName evidence="1">Small ribosomal subunit protein bS16</fullName>
    </recommendedName>
    <alternativeName>
        <fullName evidence="2">30S ribosomal protein S16</fullName>
    </alternativeName>
</protein>
<gene>
    <name evidence="1" type="primary">rpsP</name>
    <name type="ordered locus">BMASAVP1_A2545</name>
</gene>
<organism>
    <name type="scientific">Burkholderia mallei (strain SAVP1)</name>
    <dbReference type="NCBI Taxonomy" id="320388"/>
    <lineage>
        <taxon>Bacteria</taxon>
        <taxon>Pseudomonadati</taxon>
        <taxon>Pseudomonadota</taxon>
        <taxon>Betaproteobacteria</taxon>
        <taxon>Burkholderiales</taxon>
        <taxon>Burkholderiaceae</taxon>
        <taxon>Burkholderia</taxon>
        <taxon>pseudomallei group</taxon>
    </lineage>
</organism>
<feature type="chain" id="PRO_1000049228" description="Small ribosomal subunit protein bS16">
    <location>
        <begin position="1"/>
        <end position="84"/>
    </location>
</feature>